<comment type="function">
    <text evidence="2">Catalyzes the hydrolytic deamination of guanine, producing xanthine and ammonia.</text>
</comment>
<comment type="catalytic activity">
    <reaction evidence="2">
        <text>guanine + H2O + H(+) = xanthine + NH4(+)</text>
        <dbReference type="Rhea" id="RHEA:14665"/>
        <dbReference type="ChEBI" id="CHEBI:15377"/>
        <dbReference type="ChEBI" id="CHEBI:15378"/>
        <dbReference type="ChEBI" id="CHEBI:16235"/>
        <dbReference type="ChEBI" id="CHEBI:17712"/>
        <dbReference type="ChEBI" id="CHEBI:28938"/>
        <dbReference type="EC" id="3.5.4.3"/>
    </reaction>
</comment>
<comment type="cofactor">
    <cofactor evidence="2">
        <name>Zn(2+)</name>
        <dbReference type="ChEBI" id="CHEBI:29105"/>
    </cofactor>
    <text evidence="2">Binds 1 zinc ion per subunit.</text>
</comment>
<comment type="pathway">
    <text evidence="2">Purine metabolism; guanine degradation; xanthine from guanine: step 1/1.</text>
</comment>
<comment type="subunit">
    <text evidence="2">Homodimer.</text>
</comment>
<comment type="similarity">
    <text evidence="3">Belongs to the metallo-dependent hydrolases superfamily. ATZ/TRZ family.</text>
</comment>
<organism>
    <name type="scientific">Pongo abelii</name>
    <name type="common">Sumatran orangutan</name>
    <name type="synonym">Pongo pygmaeus abelii</name>
    <dbReference type="NCBI Taxonomy" id="9601"/>
    <lineage>
        <taxon>Eukaryota</taxon>
        <taxon>Metazoa</taxon>
        <taxon>Chordata</taxon>
        <taxon>Craniata</taxon>
        <taxon>Vertebrata</taxon>
        <taxon>Euteleostomi</taxon>
        <taxon>Mammalia</taxon>
        <taxon>Eutheria</taxon>
        <taxon>Euarchontoglires</taxon>
        <taxon>Primates</taxon>
        <taxon>Haplorrhini</taxon>
        <taxon>Catarrhini</taxon>
        <taxon>Hominidae</taxon>
        <taxon>Pongo</taxon>
    </lineage>
</organism>
<sequence>MCAAQMPPLAHIFRGTFVHSTWTCPMEVLRDHLLGVSDSGKIVFLEEASQQEKLAKEWCFKPCEIRELSHHEFFMPGLVDTHIHASQYSFAGSNIDLPLLEWLTKYTFPAEHRFQNTDFAEEVYTRVVRRTLKNGTTTACYFATIHTDSSLLLADITDKFGQRAFVGKVCMNLNDTFPEYNETTEESIKETERFVSEMLQRKYSRVKPIVTPRFSLSCSETLMGDLGNIAKTHDLHIQSHISENRDEVEAVKNLYPSYKNYTDVYDKNNLLTNKTVMAHGCYLSAEELNVFHERGASIAHCPNSNLSLSSGFLNVLEVLKHEVKIGLGTDVAGGYSYSMLDAIRRAVMVSNILLINKVNEKSLTLKEVFRLATLGGSQALGLDGEIGNFEVGKEFDAILINPKASDSPIDLFYGDFFGDISEAVIQKFLYLGDDRNIEEVYVGGKQVVPFSSSV</sequence>
<gene>
    <name type="primary">GDA</name>
</gene>
<protein>
    <recommendedName>
        <fullName>Guanine deaminase</fullName>
        <shortName>Guanase</shortName>
        <shortName>Guanine aminase</shortName>
        <ecNumber evidence="2">3.5.4.3</ecNumber>
    </recommendedName>
    <alternativeName>
        <fullName>Guanine aminohydrolase</fullName>
        <shortName>GAH</shortName>
    </alternativeName>
</protein>
<name>GUAD_PONAB</name>
<keyword id="KW-0378">Hydrolase</keyword>
<keyword id="KW-0479">Metal-binding</keyword>
<keyword id="KW-0597">Phosphoprotein</keyword>
<keyword id="KW-1185">Reference proteome</keyword>
<keyword id="KW-0862">Zinc</keyword>
<feature type="chain" id="PRO_0000284445" description="Guanine deaminase">
    <location>
        <begin position="1"/>
        <end position="454"/>
    </location>
</feature>
<feature type="binding site" evidence="2">
    <location>
        <position position="82"/>
    </location>
    <ligand>
        <name>Zn(2+)</name>
        <dbReference type="ChEBI" id="CHEBI:29105"/>
    </ligand>
</feature>
<feature type="binding site" evidence="2">
    <location>
        <begin position="84"/>
        <end position="87"/>
    </location>
    <ligand>
        <name>substrate</name>
    </ligand>
</feature>
<feature type="binding site" evidence="2">
    <location>
        <position position="84"/>
    </location>
    <ligand>
        <name>Zn(2+)</name>
        <dbReference type="ChEBI" id="CHEBI:29105"/>
    </ligand>
</feature>
<feature type="binding site" evidence="2">
    <location>
        <begin position="213"/>
        <end position="214"/>
    </location>
    <ligand>
        <name>substrate</name>
    </ligand>
</feature>
<feature type="binding site" evidence="2">
    <location>
        <begin position="240"/>
        <end position="243"/>
    </location>
    <ligand>
        <name>substrate</name>
    </ligand>
</feature>
<feature type="binding site" evidence="2">
    <location>
        <position position="240"/>
    </location>
    <ligand>
        <name>Zn(2+)</name>
        <dbReference type="ChEBI" id="CHEBI:29105"/>
    </ligand>
</feature>
<feature type="binding site" evidence="2">
    <location>
        <position position="330"/>
    </location>
    <ligand>
        <name>substrate</name>
    </ligand>
</feature>
<feature type="binding site" evidence="2">
    <location>
        <position position="330"/>
    </location>
    <ligand>
        <name>Zn(2+)</name>
        <dbReference type="ChEBI" id="CHEBI:29105"/>
    </ligand>
</feature>
<feature type="modified residue" description="Phosphoserine" evidence="1">
    <location>
        <position position="453"/>
    </location>
</feature>
<proteinExistence type="evidence at transcript level"/>
<accession>Q5RAV9</accession>
<reference key="1">
    <citation type="submission" date="2004-11" db="EMBL/GenBank/DDBJ databases">
        <authorList>
            <consortium name="The German cDNA consortium"/>
        </authorList>
    </citation>
    <scope>NUCLEOTIDE SEQUENCE [LARGE SCALE MRNA]</scope>
    <source>
        <tissue>Kidney</tissue>
    </source>
</reference>
<dbReference type="EC" id="3.5.4.3" evidence="2"/>
<dbReference type="EMBL" id="CR858902">
    <property type="protein sequence ID" value="CAH91101.1"/>
    <property type="molecule type" value="mRNA"/>
</dbReference>
<dbReference type="RefSeq" id="NP_001127376.1">
    <property type="nucleotide sequence ID" value="NM_001133904.1"/>
</dbReference>
<dbReference type="RefSeq" id="XP_009242793.1">
    <property type="nucleotide sequence ID" value="XM_009244518.1"/>
</dbReference>
<dbReference type="SMR" id="Q5RAV9"/>
<dbReference type="FunCoup" id="Q5RAV9">
    <property type="interactions" value="687"/>
</dbReference>
<dbReference type="STRING" id="9601.ENSPPYP00000021605"/>
<dbReference type="MEROPS" id="M38.981"/>
<dbReference type="Ensembl" id="ENSPPYT00000022489.3">
    <property type="protein sequence ID" value="ENSPPYP00000021604.3"/>
    <property type="gene ID" value="ENSPPYG00000019289.3"/>
</dbReference>
<dbReference type="GeneID" id="100174441"/>
<dbReference type="KEGG" id="pon:100174441"/>
<dbReference type="CTD" id="9615"/>
<dbReference type="eggNOG" id="KOG3968">
    <property type="taxonomic scope" value="Eukaryota"/>
</dbReference>
<dbReference type="GeneTree" id="ENSGT00390000017130"/>
<dbReference type="InParanoid" id="Q5RAV9"/>
<dbReference type="OMA" id="CVHMNDS"/>
<dbReference type="OrthoDB" id="194468at2759"/>
<dbReference type="UniPathway" id="UPA00603">
    <property type="reaction ID" value="UER00660"/>
</dbReference>
<dbReference type="Proteomes" id="UP000001595">
    <property type="component" value="Chromosome 9"/>
</dbReference>
<dbReference type="GO" id="GO:0005829">
    <property type="term" value="C:cytosol"/>
    <property type="evidence" value="ECO:0007669"/>
    <property type="project" value="TreeGrafter"/>
</dbReference>
<dbReference type="GO" id="GO:0008892">
    <property type="term" value="F:guanine deaminase activity"/>
    <property type="evidence" value="ECO:0007669"/>
    <property type="project" value="UniProtKB-EC"/>
</dbReference>
<dbReference type="GO" id="GO:0008270">
    <property type="term" value="F:zinc ion binding"/>
    <property type="evidence" value="ECO:0007669"/>
    <property type="project" value="InterPro"/>
</dbReference>
<dbReference type="GO" id="GO:0006147">
    <property type="term" value="P:guanine catabolic process"/>
    <property type="evidence" value="ECO:0007669"/>
    <property type="project" value="UniProtKB-UniPathway"/>
</dbReference>
<dbReference type="CDD" id="cd01303">
    <property type="entry name" value="GDEase"/>
    <property type="match status" value="1"/>
</dbReference>
<dbReference type="FunFam" id="3.20.20.140:FF:000021">
    <property type="entry name" value="Guanine deaminase"/>
    <property type="match status" value="1"/>
</dbReference>
<dbReference type="Gene3D" id="3.20.20.140">
    <property type="entry name" value="Metal-dependent hydrolases"/>
    <property type="match status" value="1"/>
</dbReference>
<dbReference type="Gene3D" id="2.30.40.10">
    <property type="entry name" value="Urease, subunit C, domain 1"/>
    <property type="match status" value="1"/>
</dbReference>
<dbReference type="InterPro" id="IPR006680">
    <property type="entry name" value="Amidohydro-rel"/>
</dbReference>
<dbReference type="InterPro" id="IPR014311">
    <property type="entry name" value="Guanine_deaminase"/>
</dbReference>
<dbReference type="InterPro" id="IPR011059">
    <property type="entry name" value="Metal-dep_hydrolase_composite"/>
</dbReference>
<dbReference type="InterPro" id="IPR032466">
    <property type="entry name" value="Metal_Hydrolase"/>
</dbReference>
<dbReference type="InterPro" id="IPR051607">
    <property type="entry name" value="Metallo-dep_hydrolases"/>
</dbReference>
<dbReference type="NCBIfam" id="TIGR02967">
    <property type="entry name" value="guan_deamin"/>
    <property type="match status" value="1"/>
</dbReference>
<dbReference type="PANTHER" id="PTHR11271">
    <property type="entry name" value="GUANINE DEAMINASE"/>
    <property type="match status" value="1"/>
</dbReference>
<dbReference type="PANTHER" id="PTHR11271:SF6">
    <property type="entry name" value="GUANINE DEAMINASE"/>
    <property type="match status" value="1"/>
</dbReference>
<dbReference type="Pfam" id="PF01979">
    <property type="entry name" value="Amidohydro_1"/>
    <property type="match status" value="1"/>
</dbReference>
<dbReference type="SUPFAM" id="SSF51556">
    <property type="entry name" value="Metallo-dependent hydrolases"/>
    <property type="match status" value="1"/>
</dbReference>
<evidence type="ECO:0000250" key="1">
    <source>
        <dbReference type="UniProtKB" id="Q9WTT6"/>
    </source>
</evidence>
<evidence type="ECO:0000250" key="2">
    <source>
        <dbReference type="UniProtKB" id="Q9Y2T3"/>
    </source>
</evidence>
<evidence type="ECO:0000305" key="3"/>